<protein>
    <recommendedName>
        <fullName>Apoptosis inhibitor UL38</fullName>
    </recommendedName>
</protein>
<feature type="chain" id="PRO_0000417845" description="Apoptosis inhibitor UL38">
    <location>
        <begin position="1"/>
        <end position="331"/>
    </location>
</feature>
<feature type="region of interest" description="Disordered" evidence="3">
    <location>
        <begin position="246"/>
        <end position="309"/>
    </location>
</feature>
<feature type="compositionally biased region" description="Low complexity" evidence="3">
    <location>
        <begin position="275"/>
        <end position="304"/>
    </location>
</feature>
<sequence>MTTTTHSTAAIMSLLDEAEWRQTQMDVGGLIQASALGKVALRYAVRKLMKRGARLRHDSGLYVCICDPSYEFLQMNLSKISWLERHCPPLDQELIMFGVIEAWEEASVRPTRQLVLFMTPKWDVFAYDSGILFFLAPSMAQFWHGAIVLEYWNALFPVEVRSHVRQHAHTMDDLVMVFHQLDYEKQVLEARRDKNTEGPRTFAKSVNSYVRAILESERRIREGKIPMTFVDRDSLRANSLAHIQATGAQPSHAPAQRVLSAPPSLPSPVSEEDPAAAATPPSSAATTPPSSVVPASVESELSSSPPLPPVVVKDVMYTAGEGDVVQMVVVV</sequence>
<keyword id="KW-1035">Host cytoplasm</keyword>
<keyword id="KW-1048">Host nucleus</keyword>
<keyword id="KW-0945">Host-virus interaction</keyword>
<keyword id="KW-1119">Modulation of host cell apoptosis by virus</keyword>
<keyword id="KW-1185">Reference proteome</keyword>
<proteinExistence type="evidence at protein level"/>
<name>UL38_HCMVM</name>
<accession>F5HG98</accession>
<organism>
    <name type="scientific">Human cytomegalovirus (strain Merlin)</name>
    <name type="common">HHV-5</name>
    <name type="synonym">Human herpesvirus 5</name>
    <dbReference type="NCBI Taxonomy" id="295027"/>
    <lineage>
        <taxon>Viruses</taxon>
        <taxon>Duplodnaviria</taxon>
        <taxon>Heunggongvirae</taxon>
        <taxon>Peploviricota</taxon>
        <taxon>Herviviricetes</taxon>
        <taxon>Herpesvirales</taxon>
        <taxon>Orthoherpesviridae</taxon>
        <taxon>Betaherpesvirinae</taxon>
        <taxon>Cytomegalovirus</taxon>
        <taxon>Cytomegalovirus humanbeta5</taxon>
        <taxon>Human cytomegalovirus</taxon>
    </lineage>
</organism>
<evidence type="ECO:0000250" key="1">
    <source>
        <dbReference type="UniProtKB" id="P16779"/>
    </source>
</evidence>
<evidence type="ECO:0000250" key="2">
    <source>
        <dbReference type="UniProtKB" id="Q9WT45"/>
    </source>
</evidence>
<evidence type="ECO:0000256" key="3">
    <source>
        <dbReference type="SAM" id="MobiDB-lite"/>
    </source>
</evidence>
<evidence type="ECO:0000269" key="4">
    <source>
    </source>
</evidence>
<evidence type="ECO:0000269" key="5">
    <source>
    </source>
</evidence>
<evidence type="ECO:0000269" key="6">
    <source>
    </source>
</evidence>
<evidence type="ECO:0000269" key="7">
    <source>
    </source>
</evidence>
<evidence type="ECO:0000305" key="8">
    <source>
    </source>
</evidence>
<reference key="1">
    <citation type="journal article" date="2004" name="J. Gen. Virol.">
        <title>Genetic content of wild-type human cytomegalovirus.</title>
        <authorList>
            <person name="Dolan A."/>
            <person name="Cunningham C."/>
            <person name="Hector R.D."/>
            <person name="Hassan-Walker A.F."/>
            <person name="Lee L."/>
            <person name="Addison C."/>
            <person name="Dargan D.J."/>
            <person name="McGeoch D.J."/>
            <person name="Gatherer D."/>
            <person name="Emery V.C."/>
            <person name="Griffiths P.D."/>
            <person name="Sinzger C."/>
            <person name="McSharry B.P."/>
            <person name="Wilkinson G.W.G."/>
            <person name="Davison A.J."/>
        </authorList>
    </citation>
    <scope>NUCLEOTIDE SEQUENCE [LARGE SCALE GENOMIC DNA]</scope>
</reference>
<reference key="2">
    <citation type="journal article" date="2007" name="J. Virol.">
        <title>Human cytomegalovirus UL38 protein blocks apoptosis.</title>
        <authorList>
            <person name="Terhune S."/>
            <person name="Torigoi E."/>
            <person name="Moorman N."/>
            <person name="Silva M."/>
            <person name="Qian Z."/>
            <person name="Shenk T."/>
            <person name="Yu D."/>
        </authorList>
    </citation>
    <scope>FUNCTION</scope>
    <scope>SUBCELLULAR LOCATION</scope>
</reference>
<reference key="3">
    <citation type="journal article" date="2008" name="Cell Host Microbe">
        <title>Human cytomegalovirus protein UL38 inhibits host cell stress responses by antagonizing the tuberous sclerosis protein complex.</title>
        <authorList>
            <person name="Moorman N.J."/>
            <person name="Cristea I.M."/>
            <person name="Terhune S.S."/>
            <person name="Rout M.P."/>
            <person name="Chait B.T."/>
            <person name="Shenk T."/>
        </authorList>
    </citation>
    <scope>FUNCTION</scope>
    <scope>INTERACTION WITH HOST TSC2</scope>
</reference>
<reference key="4">
    <citation type="journal article" date="2011" name="J. Virol.">
        <title>The human cytomegalovirus protein pUL38 suppresses endoplasmic reticulum stress-mediated cell death independently of its ability to induce mTORC1 activation.</title>
        <authorList>
            <person name="Qian Z."/>
            <person name="Xuan B."/>
            <person name="Gualberto N."/>
            <person name="Yu D."/>
        </authorList>
    </citation>
    <scope>FUNCTION</scope>
</reference>
<reference key="5">
    <citation type="journal article" date="2018" name="J. Virol.">
        <title>Human Cytomegalovirus Protein pUL38 Prevents Premature Cell Death by Binding to Ubiquitin-specific Protease 24 and Regulating Iron Metabolism.</title>
        <authorList>
            <person name="Sun Y."/>
            <person name="Bao Q."/>
            <person name="Xuan B."/>
            <person name="Xu W."/>
            <person name="Pan D."/>
            <person name="Li Q."/>
            <person name="Qian Z."/>
        </authorList>
    </citation>
    <scope>FUNCTION</scope>
    <scope>INTERACTION WITH HOST USP24</scope>
</reference>
<dbReference type="EMBL" id="AY446894">
    <property type="protein sequence ID" value="AAR31603.1"/>
    <property type="molecule type" value="Genomic_DNA"/>
</dbReference>
<dbReference type="RefSeq" id="YP_081497.1">
    <property type="nucleotide sequence ID" value="NC_006273.2"/>
</dbReference>
<dbReference type="SMR" id="F5HG98"/>
<dbReference type="DNASU" id="3077531"/>
<dbReference type="GeneID" id="3077531"/>
<dbReference type="KEGG" id="vg:3077531"/>
<dbReference type="Reactome" id="R-HSA-9609690">
    <property type="pathway name" value="HCMV Early Events"/>
</dbReference>
<dbReference type="Reactome" id="R-HSA-9610379">
    <property type="pathway name" value="HCMV Late Events"/>
</dbReference>
<dbReference type="Proteomes" id="UP000000938">
    <property type="component" value="Segment"/>
</dbReference>
<dbReference type="GO" id="GO:0030430">
    <property type="term" value="C:host cell cytoplasm"/>
    <property type="evidence" value="ECO:0007669"/>
    <property type="project" value="UniProtKB-SubCell"/>
</dbReference>
<dbReference type="GO" id="GO:0042025">
    <property type="term" value="C:host cell nucleus"/>
    <property type="evidence" value="ECO:0007669"/>
    <property type="project" value="UniProtKB-SubCell"/>
</dbReference>
<dbReference type="GO" id="GO:0019033">
    <property type="term" value="C:viral tegument"/>
    <property type="evidence" value="ECO:0000304"/>
    <property type="project" value="Reactome"/>
</dbReference>
<dbReference type="GO" id="GO:0052150">
    <property type="term" value="P:symbiont-mediated perturbation of host apoptosis"/>
    <property type="evidence" value="ECO:0007669"/>
    <property type="project" value="UniProtKB-KW"/>
</dbReference>
<dbReference type="InterPro" id="IPR003360">
    <property type="entry name" value="US22-like"/>
</dbReference>
<dbReference type="Pfam" id="PF02393">
    <property type="entry name" value="US22"/>
    <property type="match status" value="1"/>
</dbReference>
<gene>
    <name type="primary">UL38</name>
</gene>
<organismHost>
    <name type="scientific">Homo sapiens</name>
    <name type="common">Human</name>
    <dbReference type="NCBI Taxonomy" id="9606"/>
</organismHost>
<comment type="function">
    <text evidence="1 2 4 5 6 7 8">Plays a role in the inhibition of host apoptosis to facilitate efficient viral replication. Promotes stabilization and inactivation of host TP53 through interaction with host MDM2 (By similarity). Induces host mTORC1 activation by antagonizing the ability of host TSC1/2 to negatively regulate mTORC1 (PubMed:21715486). Thus, inhibits a growth regulatory pathway to facilitate viral replication. Prevents premature cell host cell death by blocking host ubiquitin-specific protease 24/USP24-mediated autophagic ferritin degradation in lysosomes thus maintaining lysosome integrity and cellular viability (Probable) (PubMed:29695420). Involved in the activation of host ENO2 leading to enhanced glycolysis and UDP-sugar metabolism in order to enable the expression of viral glycoproteins (By similarity).</text>
</comment>
<comment type="subunit">
    <text evidence="2 5">Interacts with host MDM2; this interaction leads to the stabilization of host TP53 (By similarity). Interacts with host TSC2; this interaction prevents host cell stress responses. Interacts with host USP24.</text>
</comment>
<comment type="subcellular location">
    <subcellularLocation>
        <location evidence="4">Host cytoplasm</location>
    </subcellularLocation>
    <subcellularLocation>
        <location evidence="4">Host nucleus</location>
    </subcellularLocation>
    <text>localized in the host nucleus at early times postinfection and then increases in both nuclear and cytoplasmic compartments during the course of infection.</text>
</comment>
<comment type="similarity">
    <text>Belongs to the beta-herpesvirinae UL38 protein family.</text>
</comment>